<reference key="1">
    <citation type="submission" date="2006-12" db="EMBL/GenBank/DDBJ databases">
        <title>Complete sequence of Halorhodospira halophila SL1.</title>
        <authorList>
            <consortium name="US DOE Joint Genome Institute"/>
            <person name="Copeland A."/>
            <person name="Lucas S."/>
            <person name="Lapidus A."/>
            <person name="Barry K."/>
            <person name="Detter J.C."/>
            <person name="Glavina del Rio T."/>
            <person name="Hammon N."/>
            <person name="Israni S."/>
            <person name="Dalin E."/>
            <person name="Tice H."/>
            <person name="Pitluck S."/>
            <person name="Saunders E."/>
            <person name="Brettin T."/>
            <person name="Bruce D."/>
            <person name="Han C."/>
            <person name="Tapia R."/>
            <person name="Schmutz J."/>
            <person name="Larimer F."/>
            <person name="Land M."/>
            <person name="Hauser L."/>
            <person name="Kyrpides N."/>
            <person name="Mikhailova N."/>
            <person name="Hoff W."/>
            <person name="Richardson P."/>
        </authorList>
    </citation>
    <scope>NUCLEOTIDE SEQUENCE [LARGE SCALE GENOMIC DNA]</scope>
    <source>
        <strain>DSM 244 / SL1</strain>
    </source>
</reference>
<gene>
    <name evidence="1" type="primary">pyrB</name>
    <name type="ordered locus">Hhal_0941</name>
</gene>
<evidence type="ECO:0000255" key="1">
    <source>
        <dbReference type="HAMAP-Rule" id="MF_00001"/>
    </source>
</evidence>
<accession>A1WVK5</accession>
<name>PYRB_HALHL</name>
<sequence>MSVQLDPQGQLRHLVTTEGLPRELLTRILDTAESFSGVLGKSVKKVPLLRGRTIINLFFEPSTRTRTTFELAAQRLSADVLNIDVATSSTSKGESLLDMLRNLEAMQCDAFVVRHADSGAAEFIARHVAPGVAVINAGDGRHAHPTQALLDAFTIRREKGPLEPLTIAIVGDILHSRVARSQIHALLGLGAGEVRVIGPRTLLPRDIQRLGVRVYEDMDAGLDGADVLIMLRLQRERMRGALLPSESEYFSRYGLTEQRLERTHPEAIVMHPGPVNRGVELDPQVADGPRSVILRQVTNGIAVRMAVMSIVLGGHGEAPAEPIEEASS</sequence>
<keyword id="KW-0665">Pyrimidine biosynthesis</keyword>
<keyword id="KW-1185">Reference proteome</keyword>
<keyword id="KW-0808">Transferase</keyword>
<feature type="chain" id="PRO_0000321107" description="Aspartate carbamoyltransferase catalytic subunit">
    <location>
        <begin position="1"/>
        <end position="328"/>
    </location>
</feature>
<feature type="binding site" evidence="1">
    <location>
        <position position="64"/>
    </location>
    <ligand>
        <name>carbamoyl phosphate</name>
        <dbReference type="ChEBI" id="CHEBI:58228"/>
    </ligand>
</feature>
<feature type="binding site" evidence="1">
    <location>
        <position position="65"/>
    </location>
    <ligand>
        <name>carbamoyl phosphate</name>
        <dbReference type="ChEBI" id="CHEBI:58228"/>
    </ligand>
</feature>
<feature type="binding site" evidence="1">
    <location>
        <position position="92"/>
    </location>
    <ligand>
        <name>L-aspartate</name>
        <dbReference type="ChEBI" id="CHEBI:29991"/>
    </ligand>
</feature>
<feature type="binding site" evidence="1">
    <location>
        <position position="114"/>
    </location>
    <ligand>
        <name>carbamoyl phosphate</name>
        <dbReference type="ChEBI" id="CHEBI:58228"/>
    </ligand>
</feature>
<feature type="binding site" evidence="1">
    <location>
        <position position="144"/>
    </location>
    <ligand>
        <name>carbamoyl phosphate</name>
        <dbReference type="ChEBI" id="CHEBI:58228"/>
    </ligand>
</feature>
<feature type="binding site" evidence="1">
    <location>
        <position position="147"/>
    </location>
    <ligand>
        <name>carbamoyl phosphate</name>
        <dbReference type="ChEBI" id="CHEBI:58228"/>
    </ligand>
</feature>
<feature type="binding site" evidence="1">
    <location>
        <position position="177"/>
    </location>
    <ligand>
        <name>L-aspartate</name>
        <dbReference type="ChEBI" id="CHEBI:29991"/>
    </ligand>
</feature>
<feature type="binding site" evidence="1">
    <location>
        <position position="232"/>
    </location>
    <ligand>
        <name>L-aspartate</name>
        <dbReference type="ChEBI" id="CHEBI:29991"/>
    </ligand>
</feature>
<feature type="binding site" evidence="1">
    <location>
        <position position="273"/>
    </location>
    <ligand>
        <name>carbamoyl phosphate</name>
        <dbReference type="ChEBI" id="CHEBI:58228"/>
    </ligand>
</feature>
<feature type="binding site" evidence="1">
    <location>
        <position position="274"/>
    </location>
    <ligand>
        <name>carbamoyl phosphate</name>
        <dbReference type="ChEBI" id="CHEBI:58228"/>
    </ligand>
</feature>
<dbReference type="EC" id="2.1.3.2" evidence="1"/>
<dbReference type="EMBL" id="CP000544">
    <property type="protein sequence ID" value="ABM61717.1"/>
    <property type="molecule type" value="Genomic_DNA"/>
</dbReference>
<dbReference type="RefSeq" id="WP_011813740.1">
    <property type="nucleotide sequence ID" value="NC_008789.1"/>
</dbReference>
<dbReference type="SMR" id="A1WVK5"/>
<dbReference type="STRING" id="349124.Hhal_0941"/>
<dbReference type="KEGG" id="hha:Hhal_0941"/>
<dbReference type="eggNOG" id="COG0540">
    <property type="taxonomic scope" value="Bacteria"/>
</dbReference>
<dbReference type="HOGENOM" id="CLU_043846_2_0_6"/>
<dbReference type="OrthoDB" id="9774690at2"/>
<dbReference type="UniPathway" id="UPA00070">
    <property type="reaction ID" value="UER00116"/>
</dbReference>
<dbReference type="Proteomes" id="UP000000647">
    <property type="component" value="Chromosome"/>
</dbReference>
<dbReference type="GO" id="GO:0005829">
    <property type="term" value="C:cytosol"/>
    <property type="evidence" value="ECO:0007669"/>
    <property type="project" value="TreeGrafter"/>
</dbReference>
<dbReference type="GO" id="GO:0016597">
    <property type="term" value="F:amino acid binding"/>
    <property type="evidence" value="ECO:0007669"/>
    <property type="project" value="InterPro"/>
</dbReference>
<dbReference type="GO" id="GO:0004070">
    <property type="term" value="F:aspartate carbamoyltransferase activity"/>
    <property type="evidence" value="ECO:0007669"/>
    <property type="project" value="UniProtKB-UniRule"/>
</dbReference>
<dbReference type="GO" id="GO:0006207">
    <property type="term" value="P:'de novo' pyrimidine nucleobase biosynthetic process"/>
    <property type="evidence" value="ECO:0007669"/>
    <property type="project" value="InterPro"/>
</dbReference>
<dbReference type="GO" id="GO:0044205">
    <property type="term" value="P:'de novo' UMP biosynthetic process"/>
    <property type="evidence" value="ECO:0007669"/>
    <property type="project" value="UniProtKB-UniRule"/>
</dbReference>
<dbReference type="GO" id="GO:0006520">
    <property type="term" value="P:amino acid metabolic process"/>
    <property type="evidence" value="ECO:0007669"/>
    <property type="project" value="InterPro"/>
</dbReference>
<dbReference type="FunFam" id="3.40.50.1370:FF:000007">
    <property type="entry name" value="Aspartate carbamoyltransferase"/>
    <property type="match status" value="1"/>
</dbReference>
<dbReference type="Gene3D" id="3.40.50.1370">
    <property type="entry name" value="Aspartate/ornithine carbamoyltransferase"/>
    <property type="match status" value="2"/>
</dbReference>
<dbReference type="HAMAP" id="MF_00001">
    <property type="entry name" value="Asp_carb_tr"/>
    <property type="match status" value="1"/>
</dbReference>
<dbReference type="InterPro" id="IPR006132">
    <property type="entry name" value="Asp/Orn_carbamoyltranf_P-bd"/>
</dbReference>
<dbReference type="InterPro" id="IPR006130">
    <property type="entry name" value="Asp/Orn_carbamoylTrfase"/>
</dbReference>
<dbReference type="InterPro" id="IPR036901">
    <property type="entry name" value="Asp/Orn_carbamoylTrfase_sf"/>
</dbReference>
<dbReference type="InterPro" id="IPR002082">
    <property type="entry name" value="Asp_carbamoyltransf"/>
</dbReference>
<dbReference type="InterPro" id="IPR006131">
    <property type="entry name" value="Asp_carbamoyltransf_Asp/Orn-bd"/>
</dbReference>
<dbReference type="NCBIfam" id="TIGR00670">
    <property type="entry name" value="asp_carb_tr"/>
    <property type="match status" value="1"/>
</dbReference>
<dbReference type="NCBIfam" id="NF002032">
    <property type="entry name" value="PRK00856.1"/>
    <property type="match status" value="1"/>
</dbReference>
<dbReference type="PANTHER" id="PTHR45753:SF6">
    <property type="entry name" value="ASPARTATE CARBAMOYLTRANSFERASE"/>
    <property type="match status" value="1"/>
</dbReference>
<dbReference type="PANTHER" id="PTHR45753">
    <property type="entry name" value="ORNITHINE CARBAMOYLTRANSFERASE, MITOCHONDRIAL"/>
    <property type="match status" value="1"/>
</dbReference>
<dbReference type="Pfam" id="PF00185">
    <property type="entry name" value="OTCace"/>
    <property type="match status" value="1"/>
</dbReference>
<dbReference type="Pfam" id="PF02729">
    <property type="entry name" value="OTCace_N"/>
    <property type="match status" value="1"/>
</dbReference>
<dbReference type="PRINTS" id="PR00100">
    <property type="entry name" value="AOTCASE"/>
</dbReference>
<dbReference type="PRINTS" id="PR00101">
    <property type="entry name" value="ATCASE"/>
</dbReference>
<dbReference type="SUPFAM" id="SSF53671">
    <property type="entry name" value="Aspartate/ornithine carbamoyltransferase"/>
    <property type="match status" value="1"/>
</dbReference>
<dbReference type="PROSITE" id="PS00097">
    <property type="entry name" value="CARBAMOYLTRANSFERASE"/>
    <property type="match status" value="1"/>
</dbReference>
<protein>
    <recommendedName>
        <fullName evidence="1">Aspartate carbamoyltransferase catalytic subunit</fullName>
        <ecNumber evidence="1">2.1.3.2</ecNumber>
    </recommendedName>
    <alternativeName>
        <fullName evidence="1">Aspartate transcarbamylase</fullName>
        <shortName evidence="1">ATCase</shortName>
    </alternativeName>
</protein>
<proteinExistence type="inferred from homology"/>
<comment type="function">
    <text evidence="1">Catalyzes the condensation of carbamoyl phosphate and aspartate to form carbamoyl aspartate and inorganic phosphate, the committed step in the de novo pyrimidine nucleotide biosynthesis pathway.</text>
</comment>
<comment type="catalytic activity">
    <reaction evidence="1">
        <text>carbamoyl phosphate + L-aspartate = N-carbamoyl-L-aspartate + phosphate + H(+)</text>
        <dbReference type="Rhea" id="RHEA:20013"/>
        <dbReference type="ChEBI" id="CHEBI:15378"/>
        <dbReference type="ChEBI" id="CHEBI:29991"/>
        <dbReference type="ChEBI" id="CHEBI:32814"/>
        <dbReference type="ChEBI" id="CHEBI:43474"/>
        <dbReference type="ChEBI" id="CHEBI:58228"/>
        <dbReference type="EC" id="2.1.3.2"/>
    </reaction>
</comment>
<comment type="pathway">
    <text evidence="1">Pyrimidine metabolism; UMP biosynthesis via de novo pathway; (S)-dihydroorotate from bicarbonate: step 2/3.</text>
</comment>
<comment type="subunit">
    <text evidence="1">Heterododecamer (2C3:3R2) of six catalytic PyrB chains organized as two trimers (C3), and six regulatory PyrI chains organized as three dimers (R2).</text>
</comment>
<comment type="similarity">
    <text evidence="1">Belongs to the aspartate/ornithine carbamoyltransferase superfamily. ATCase family.</text>
</comment>
<organism>
    <name type="scientific">Halorhodospira halophila (strain DSM 244 / SL1)</name>
    <name type="common">Ectothiorhodospira halophila (strain DSM 244 / SL1)</name>
    <dbReference type="NCBI Taxonomy" id="349124"/>
    <lineage>
        <taxon>Bacteria</taxon>
        <taxon>Pseudomonadati</taxon>
        <taxon>Pseudomonadota</taxon>
        <taxon>Gammaproteobacteria</taxon>
        <taxon>Chromatiales</taxon>
        <taxon>Ectothiorhodospiraceae</taxon>
        <taxon>Halorhodospira</taxon>
    </lineage>
</organism>